<feature type="chain" id="PRO_0000075451" description="Transposase for insertion sequence element IS1001">
    <location>
        <begin position="1"/>
        <end position="406"/>
    </location>
</feature>
<reference key="1">
    <citation type="journal article" date="1993" name="J. Bacteriol.">
        <title>Characterization of IS1001, an insertion sequence element of Bordetella parapertussis.</title>
        <authorList>
            <person name="van der Zee A."/>
            <person name="Agterberg C."/>
            <person name="van Agterveld M."/>
            <person name="Peeters M."/>
            <person name="Mooi F.R."/>
        </authorList>
    </citation>
    <scope>NUCLEOTIDE SEQUENCE [GENOMIC DNA]</scope>
</reference>
<sequence length="406" mass="47527">MLDRKLMESLGGWQGYGVERVEWPEDPGRTLSIYLKPTAKVMLCEQCGARCRQVHETTVRRVRDLPIFEYRVVLHVPRRRLWCEQCGGPRLERLAWLGRYQRVTDRLAQACSQLLQSSNVQAVARFFELGWHTVKTLDKARLRASVREPDWSKIEYLAMDEFALHKGHRYATVVVDPIGRQVLWIGPGRSRETARAFFEQLPPGAAQRIKAVAIDMTTAYELEIQAHSPQAEIVYDLFHVVAKYGREVIDRVRVDQANQLRQDRPARRIIKSSRWLLLRNRDNLDRQQAVRLDELLQANQPLLTVYVLRDELKRLWFYQRPAWARQAWNHWYEQAEQSGIAALNTFAQRLKGYLHGILARCRHPLNTSIVEGINNTIKVIKRRAYGYRDQEYFFLKIRAAFPGNAR</sequence>
<evidence type="ECO:0000305" key="1"/>
<proteinExistence type="inferred from homology"/>
<comment type="function">
    <text>Involved in the transposition of the insertion sequence.</text>
</comment>
<comment type="similarity">
    <text evidence="1">Belongs to the transposase 12 family.</text>
</comment>
<organism>
    <name type="scientific">Bordetella parapertussis</name>
    <dbReference type="NCBI Taxonomy" id="519"/>
    <lineage>
        <taxon>Bacteria</taxon>
        <taxon>Pseudomonadati</taxon>
        <taxon>Pseudomonadota</taxon>
        <taxon>Betaproteobacteria</taxon>
        <taxon>Burkholderiales</taxon>
        <taxon>Alcaligenaceae</taxon>
        <taxon>Bordetella</taxon>
    </lineage>
</organism>
<accession>Q06126</accession>
<gene>
    <name type="primary">tnpA</name>
</gene>
<protein>
    <recommendedName>
        <fullName>Transposase for insertion sequence element IS1001</fullName>
    </recommendedName>
</protein>
<dbReference type="EMBL" id="X66858">
    <property type="protein sequence ID" value="CAA47326.1"/>
    <property type="molecule type" value="Genomic_DNA"/>
</dbReference>
<dbReference type="PIR" id="A40629">
    <property type="entry name" value="A40629"/>
</dbReference>
<dbReference type="GO" id="GO:0003677">
    <property type="term" value="F:DNA binding"/>
    <property type="evidence" value="ECO:0007669"/>
    <property type="project" value="UniProtKB-KW"/>
</dbReference>
<dbReference type="GO" id="GO:0006310">
    <property type="term" value="P:DNA recombination"/>
    <property type="evidence" value="ECO:0007669"/>
    <property type="project" value="UniProtKB-KW"/>
</dbReference>
<dbReference type="GO" id="GO:0032196">
    <property type="term" value="P:transposition"/>
    <property type="evidence" value="ECO:0007669"/>
    <property type="project" value="UniProtKB-KW"/>
</dbReference>
<dbReference type="InterPro" id="IPR047951">
    <property type="entry name" value="Transpos_ISL3"/>
</dbReference>
<dbReference type="InterPro" id="IPR002560">
    <property type="entry name" value="Transposase_DDE"/>
</dbReference>
<dbReference type="InterPro" id="IPR032877">
    <property type="entry name" value="Transposase_HTH"/>
</dbReference>
<dbReference type="InterPro" id="IPR029261">
    <property type="entry name" value="Transposase_Znf"/>
</dbReference>
<dbReference type="NCBIfam" id="NF033550">
    <property type="entry name" value="transpos_ISL3"/>
    <property type="match status" value="1"/>
</dbReference>
<dbReference type="PANTHER" id="PTHR33498">
    <property type="entry name" value="TRANSPOSASE FOR INSERTION SEQUENCE ELEMENT IS1557"/>
    <property type="match status" value="1"/>
</dbReference>
<dbReference type="PANTHER" id="PTHR33498:SF1">
    <property type="entry name" value="TRANSPOSASE FOR INSERTION SEQUENCE ELEMENT IS1557"/>
    <property type="match status" value="1"/>
</dbReference>
<dbReference type="Pfam" id="PF01610">
    <property type="entry name" value="DDE_Tnp_ISL3"/>
    <property type="match status" value="1"/>
</dbReference>
<dbReference type="Pfam" id="PF13542">
    <property type="entry name" value="HTH_Tnp_ISL3"/>
    <property type="match status" value="1"/>
</dbReference>
<dbReference type="Pfam" id="PF14690">
    <property type="entry name" value="Zn_ribbon_ISL3"/>
    <property type="match status" value="1"/>
</dbReference>
<keyword id="KW-0233">DNA recombination</keyword>
<keyword id="KW-0238">DNA-binding</keyword>
<keyword id="KW-0814">Transposable element</keyword>
<keyword id="KW-0815">Transposition</keyword>
<name>TNPA_BORPP</name>